<protein>
    <recommendedName>
        <fullName evidence="4">Toxin subunit YenA1</fullName>
    </recommendedName>
</protein>
<proteinExistence type="evidence at protein level"/>
<organism>
    <name type="scientific">Yersinia entomophaga</name>
    <dbReference type="NCBI Taxonomy" id="935293"/>
    <lineage>
        <taxon>Bacteria</taxon>
        <taxon>Pseudomonadati</taxon>
        <taxon>Pseudomonadota</taxon>
        <taxon>Gammaproteobacteria</taxon>
        <taxon>Enterobacterales</taxon>
        <taxon>Yersiniaceae</taxon>
        <taxon>Yersinia</taxon>
    </lineage>
</organism>
<comment type="function">
    <text evidence="2 3 5">Part of an orally active toxin complex (TC) with strong insecticidal effects on larvae of the Coleoptera Costelytra zealandica, Acrossidius tasmania and Adoryphorus couloni and some Lepidoptera larvae (PubMed:21278295, PubMed:22158901). The TC has an endochitinase activity (Probable) (PubMed:21278295).</text>
</comment>
<comment type="activity regulation">
    <text evidence="2">Toxin complex is secreted when grown at 25 degrees Celsius or less; at higher temperatures the proteins are present intracellularly but not secreted.</text>
</comment>
<comment type="subunit">
    <text evidence="2 3">Semipurified toxin complex consists of at least YenA1, YenA2, YenB, YenC1, YenC2, Chi1 and Chi2 (PubMed:21278295). The Yen-TC:K9 subcomplex is about 26 nm tall and 22 nm in diameter with 5-fold symmetry and 5 copies of YenA1, YenA2, Chi1 and Chi2; the chitinase subunits may be solvent accessible on the exterior the complex (PubMed:22158901). The Yen-TC:K9 subcomplex has no insecticidal activity (PubMed:22158901). The native complex with additional YenB, YenC1 and YenC2 subunits is 16 nm taller and is insecticidal; the toxicity-conferring subunits are present at about 1 copy each (PubMed:22158901).</text>
</comment>
<comment type="subcellular location">
    <subcellularLocation>
        <location evidence="2">Secreted</location>
    </subcellularLocation>
    <text evidence="2">Secreted when grown at 25 degrees Celsius or less, but not when grown at 30 or 37 degrees Celsius.</text>
</comment>
<comment type="disruption phenotype">
    <text evidence="2">Cells with a disrupted yenA1-yenA2-chi2-yenB-yenC1-yenC2 locus are no longer pathogenic in C.zealandica larvae.</text>
</comment>
<accession>B6A877</accession>
<dbReference type="EMBL" id="DQ400808">
    <property type="protein sequence ID" value="ABG33869.1"/>
    <property type="molecule type" value="Genomic_DNA"/>
</dbReference>
<dbReference type="RefSeq" id="WP_064513225.1">
    <property type="nucleotide sequence ID" value="NZ_CP010029.1"/>
</dbReference>
<dbReference type="PDB" id="6OGD">
    <property type="method" value="EM"/>
    <property type="resolution" value="4.40 A"/>
    <property type="chains" value="A/D/G/J/M=1-1164"/>
</dbReference>
<dbReference type="PDBsum" id="6OGD"/>
<dbReference type="EMDB" id="EMD-20053"/>
<dbReference type="EMDB" id="EMD-20054"/>
<dbReference type="SMR" id="B6A877"/>
<dbReference type="DIP" id="DIP-60373N"/>
<dbReference type="IntAct" id="B6A877">
    <property type="interactions" value="1"/>
</dbReference>
<dbReference type="STRING" id="935293.PL78_03745"/>
<dbReference type="KEGG" id="yeg:PL78_03745"/>
<dbReference type="PATRIC" id="fig|935293.3.peg.806"/>
<dbReference type="OrthoDB" id="6749953at2"/>
<dbReference type="GO" id="GO:0005576">
    <property type="term" value="C:extracellular region"/>
    <property type="evidence" value="ECO:0007669"/>
    <property type="project" value="UniProtKB-SubCell"/>
</dbReference>
<dbReference type="InterPro" id="IPR018003">
    <property type="entry name" value="Insecticidal_toxin/plasmid_vir"/>
</dbReference>
<dbReference type="Pfam" id="PF03538">
    <property type="entry name" value="VRP1"/>
    <property type="match status" value="1"/>
</dbReference>
<feature type="chain" id="PRO_0000445771" description="Toxin subunit YenA1">
    <location>
        <begin position="1"/>
        <end position="1164"/>
    </location>
</feature>
<feature type="region of interest" description="Disordered" evidence="1">
    <location>
        <begin position="106"/>
        <end position="131"/>
    </location>
</feature>
<feature type="compositionally biased region" description="Low complexity" evidence="1">
    <location>
        <begin position="118"/>
        <end position="130"/>
    </location>
</feature>
<keyword id="KW-0002">3D-structure</keyword>
<keyword id="KW-0964">Secreted</keyword>
<keyword id="KW-0843">Virulence</keyword>
<sequence>MDKYNNYSNVIKNKSSISPLLAAAAKIEPEITVLSSASKSNRSQYSQSLADTLLGLGYRSIFDIAKVSRQRFIKRHDESLLGNGAVIFDKAVSMANQVLQKYRKNRLEKSNSPLVPQTSSSTDASSESQTNKLPEYNQLFPEPWDNFCRPGAIEALDSPASYLLDLYKFIQSVELDGSNQARKLETRRADIPKLSLDNDALYKEVTALSIVNDVLSGSAREYIDQSGQADKAVNQILGDTHFPFTLPYSLPTQQINKGLGASNIELGTVIQRVDPQFSWNTTQEKYNQVLLAYTQLSSEQIALLSLPDVFTQNFLTQTELSAGYLSASTTEILAEKDLSRHGYIVKAADNIKGPTQLVEHSDASYDVIELTCTNQAKETITVKLRGENIITYQRTKARMVPFDNSSPFSRQLKLTFVAEDNPSLGNLDKGPYFANMDIYAAEWVRENVSSETMVSRPFLTMTYRIAIAKAGASLEELQPEADAFFINNFGLSAEDSSQLVKLVAFGDQTGSKAEEIESLLSCGENLPIVSPNVIFANPIFGSYFNDEPFPAPYHFGGVYINAHQRNAMTIIRAEGGREIQSLSNFRLERLNRFIRLQRWLDLPSHQLDLLLTSVMQADADNSQQEITEPVLKSLGLFRHLNLQYKITPEIFSSWLYQLTPFAVSGEIAFFDRIFNREQLFDQPFILDGGSFTYLDAKGSDAKSVKQLCAGLNISAVTFQFIAPLVQSALGLEAGTLVRSFEVVSSLYRLVSIPQTFGLSTEDGLILMNILTDEMGYLAKQPAFDDKQTQDKDFLSIILKMEALSAWLTKNNLTPASLALLLGVTRLAVVPTNNMVTFFKGIANGLSENVCLTTDDFQRQELEGADWWTLLSTNQVIDDMGLVLDIHPVWGKSDEEMLMEKIQSIGVSNDNNTLSIIVQILIQAKNAQENLLSQTISAEYGVERSVVPLQLRWLGSNVYSVLNQVLNNTPTDISSIVPKLSELTYSLLIYTQLINSLKLNKEFIFLRLTQPNWLGLTQPKLSTQLSLPEIYLITCYQDWVVNANKNEDSIHEYLEFANIKKTEAEKTLVDNSEKCAELLAEILAWDAGEILKAASLLGLNPPQATNVFEIDWIRRLQTLSEKTMISTEYLWQMGDLTENSEFSLKEGVGEAVMAALKAQGDSDNV</sequence>
<reference key="1">
    <citation type="journal article" date="2011" name="J. Bacteriol.">
        <title>The main virulence determinant of Yersinia entomophaga MH96 is a broad-host-range toxin complex active against insects.</title>
        <authorList>
            <person name="Hurst M.R."/>
            <person name="Jones S.A."/>
            <person name="Binglin T."/>
            <person name="Harper L.A."/>
            <person name="Jackson T.A."/>
            <person name="Glare T.R."/>
        </authorList>
    </citation>
    <scope>NUCLEOTIDE SEQUENCE [GENOMIC DNA]</scope>
    <scope>IDENTIFICATION BY MASS SPECTROMETRY</scope>
    <scope>FUNCTION</scope>
    <scope>ACTIVITY REGULATION</scope>
    <scope>SUBUNIT</scope>
    <scope>SUBCELLULAR LOCATION</scope>
    <scope>DISRUPTION PHENOTYPE</scope>
    <source>
        <strain>ATCC BAA-1678 / DSM 22339 / MH96</strain>
    </source>
</reference>
<reference key="2">
    <citation type="journal article" date="2011" name="Proc. Natl. Acad. Sci. U.S.A.">
        <title>3D structure of the Yersinia entomophaga toxin complex and implications for insecticidal activity.</title>
        <authorList>
            <person name="Landsberg M.J."/>
            <person name="Jones S.A."/>
            <person name="Rothnagel R."/>
            <person name="Busby J.N."/>
            <person name="Marshall S.D."/>
            <person name="Simpson R.M."/>
            <person name="Lott J.S."/>
            <person name="Hankamer B."/>
            <person name="Hurst M.R."/>
        </authorList>
    </citation>
    <scope>ELECTRON MICROSCOPY (17.0 ANGSTROMS) OF YEN-TC:K9 COMPLEX</scope>
    <scope>FUNCTION</scope>
    <scope>SUBUNIT</scope>
    <source>
        <strain>ATCC BAA-1678 / DSM 22339 / MH96</strain>
    </source>
</reference>
<evidence type="ECO:0000256" key="1">
    <source>
        <dbReference type="SAM" id="MobiDB-lite"/>
    </source>
</evidence>
<evidence type="ECO:0000269" key="2">
    <source>
    </source>
</evidence>
<evidence type="ECO:0000269" key="3">
    <source>
    </source>
</evidence>
<evidence type="ECO:0000303" key="4">
    <source>
    </source>
</evidence>
<evidence type="ECO:0000305" key="5">
    <source>
    </source>
</evidence>
<name>YENA1_YERET</name>
<gene>
    <name evidence="4" type="primary">yenA1</name>
</gene>